<accession>Q5M2C6</accession>
<gene>
    <name evidence="1" type="primary">rpsZ</name>
    <name evidence="1" type="synonym">rpsN</name>
    <name type="ordered locus">stu1921</name>
</gene>
<feature type="chain" id="PRO_0000269149" description="Small ribosomal subunit protein uS14">
    <location>
        <begin position="1"/>
        <end position="61"/>
    </location>
</feature>
<feature type="binding site" evidence="1">
    <location>
        <position position="24"/>
    </location>
    <ligand>
        <name>Zn(2+)</name>
        <dbReference type="ChEBI" id="CHEBI:29105"/>
    </ligand>
</feature>
<feature type="binding site" evidence="1">
    <location>
        <position position="27"/>
    </location>
    <ligand>
        <name>Zn(2+)</name>
        <dbReference type="ChEBI" id="CHEBI:29105"/>
    </ligand>
</feature>
<feature type="binding site" evidence="1">
    <location>
        <position position="40"/>
    </location>
    <ligand>
        <name>Zn(2+)</name>
        <dbReference type="ChEBI" id="CHEBI:29105"/>
    </ligand>
</feature>
<feature type="binding site" evidence="1">
    <location>
        <position position="43"/>
    </location>
    <ligand>
        <name>Zn(2+)</name>
        <dbReference type="ChEBI" id="CHEBI:29105"/>
    </ligand>
</feature>
<comment type="function">
    <text evidence="1">Binds 16S rRNA, required for the assembly of 30S particles and may also be responsible for determining the conformation of the 16S rRNA at the A site.</text>
</comment>
<comment type="cofactor">
    <cofactor evidence="1">
        <name>Zn(2+)</name>
        <dbReference type="ChEBI" id="CHEBI:29105"/>
    </cofactor>
    <text evidence="1">Binds 1 zinc ion per subunit.</text>
</comment>
<comment type="subunit">
    <text evidence="1">Part of the 30S ribosomal subunit. Contacts proteins S3 and S10.</text>
</comment>
<comment type="similarity">
    <text evidence="1">Belongs to the universal ribosomal protein uS14 family. Zinc-binding uS14 subfamily.</text>
</comment>
<name>RS14Z_STRT2</name>
<keyword id="KW-0479">Metal-binding</keyword>
<keyword id="KW-1185">Reference proteome</keyword>
<keyword id="KW-0687">Ribonucleoprotein</keyword>
<keyword id="KW-0689">Ribosomal protein</keyword>
<keyword id="KW-0694">RNA-binding</keyword>
<keyword id="KW-0699">rRNA-binding</keyword>
<keyword id="KW-0862">Zinc</keyword>
<dbReference type="EMBL" id="CP000023">
    <property type="protein sequence ID" value="AAV61519.1"/>
    <property type="molecule type" value="Genomic_DNA"/>
</dbReference>
<dbReference type="RefSeq" id="WP_002946164.1">
    <property type="nucleotide sequence ID" value="NC_006448.1"/>
</dbReference>
<dbReference type="SMR" id="Q5M2C6"/>
<dbReference type="STRING" id="264199.stu1921"/>
<dbReference type="KEGG" id="stl:stu1921"/>
<dbReference type="eggNOG" id="COG0199">
    <property type="taxonomic scope" value="Bacteria"/>
</dbReference>
<dbReference type="HOGENOM" id="CLU_139869_3_0_9"/>
<dbReference type="Proteomes" id="UP000001170">
    <property type="component" value="Chromosome"/>
</dbReference>
<dbReference type="GO" id="GO:0015935">
    <property type="term" value="C:small ribosomal subunit"/>
    <property type="evidence" value="ECO:0007669"/>
    <property type="project" value="TreeGrafter"/>
</dbReference>
<dbReference type="GO" id="GO:0019843">
    <property type="term" value="F:rRNA binding"/>
    <property type="evidence" value="ECO:0007669"/>
    <property type="project" value="UniProtKB-UniRule"/>
</dbReference>
<dbReference type="GO" id="GO:0003735">
    <property type="term" value="F:structural constituent of ribosome"/>
    <property type="evidence" value="ECO:0007669"/>
    <property type="project" value="InterPro"/>
</dbReference>
<dbReference type="GO" id="GO:0008270">
    <property type="term" value="F:zinc ion binding"/>
    <property type="evidence" value="ECO:0007669"/>
    <property type="project" value="UniProtKB-UniRule"/>
</dbReference>
<dbReference type="GO" id="GO:0006412">
    <property type="term" value="P:translation"/>
    <property type="evidence" value="ECO:0007669"/>
    <property type="project" value="UniProtKB-UniRule"/>
</dbReference>
<dbReference type="FunFam" id="4.10.830.10:FF:000001">
    <property type="entry name" value="30S ribosomal protein S14 type Z"/>
    <property type="match status" value="1"/>
</dbReference>
<dbReference type="Gene3D" id="4.10.830.10">
    <property type="entry name" value="30s Ribosomal Protein S14, Chain N"/>
    <property type="match status" value="1"/>
</dbReference>
<dbReference type="HAMAP" id="MF_01364_B">
    <property type="entry name" value="Ribosomal_uS14_2_B"/>
    <property type="match status" value="1"/>
</dbReference>
<dbReference type="InterPro" id="IPR001209">
    <property type="entry name" value="Ribosomal_uS14"/>
</dbReference>
<dbReference type="InterPro" id="IPR023053">
    <property type="entry name" value="Ribosomal_uS14_bact"/>
</dbReference>
<dbReference type="InterPro" id="IPR018271">
    <property type="entry name" value="Ribosomal_uS14_CS"/>
</dbReference>
<dbReference type="InterPro" id="IPR043140">
    <property type="entry name" value="Ribosomal_uS14_sf"/>
</dbReference>
<dbReference type="NCBIfam" id="NF005974">
    <property type="entry name" value="PRK08061.1"/>
    <property type="match status" value="1"/>
</dbReference>
<dbReference type="PANTHER" id="PTHR19836">
    <property type="entry name" value="30S RIBOSOMAL PROTEIN S14"/>
    <property type="match status" value="1"/>
</dbReference>
<dbReference type="PANTHER" id="PTHR19836:SF26">
    <property type="entry name" value="SMALL RIBOSOMAL SUBUNIT PROTEIN US14B"/>
    <property type="match status" value="1"/>
</dbReference>
<dbReference type="Pfam" id="PF00253">
    <property type="entry name" value="Ribosomal_S14"/>
    <property type="match status" value="1"/>
</dbReference>
<dbReference type="SUPFAM" id="SSF57716">
    <property type="entry name" value="Glucocorticoid receptor-like (DNA-binding domain)"/>
    <property type="match status" value="1"/>
</dbReference>
<dbReference type="PROSITE" id="PS00527">
    <property type="entry name" value="RIBOSOMAL_S14"/>
    <property type="match status" value="1"/>
</dbReference>
<reference key="1">
    <citation type="journal article" date="2004" name="Nat. Biotechnol.">
        <title>Complete sequence and comparative genome analysis of the dairy bacterium Streptococcus thermophilus.</title>
        <authorList>
            <person name="Bolotin A."/>
            <person name="Quinquis B."/>
            <person name="Renault P."/>
            <person name="Sorokin A."/>
            <person name="Ehrlich S.D."/>
            <person name="Kulakauskas S."/>
            <person name="Lapidus A."/>
            <person name="Goltsman E."/>
            <person name="Mazur M."/>
            <person name="Pusch G.D."/>
            <person name="Fonstein M."/>
            <person name="Overbeek R."/>
            <person name="Kyprides N."/>
            <person name="Purnelle B."/>
            <person name="Prozzi D."/>
            <person name="Ngui K."/>
            <person name="Masuy D."/>
            <person name="Hancy F."/>
            <person name="Burteau S."/>
            <person name="Boutry M."/>
            <person name="Delcour J."/>
            <person name="Goffeau A."/>
            <person name="Hols P."/>
        </authorList>
    </citation>
    <scope>NUCLEOTIDE SEQUENCE [LARGE SCALE GENOMIC DNA]</scope>
    <source>
        <strain>ATCC BAA-250 / LMG 18311</strain>
    </source>
</reference>
<sequence>MAKKSLIAKNKRPAKFSTQAYTRCERCGRPHSVYRKFKLCRVCFRELAHKGQIPGVTKASW</sequence>
<evidence type="ECO:0000255" key="1">
    <source>
        <dbReference type="HAMAP-Rule" id="MF_01364"/>
    </source>
</evidence>
<evidence type="ECO:0000305" key="2"/>
<organism>
    <name type="scientific">Streptococcus thermophilus (strain ATCC BAA-250 / LMG 18311)</name>
    <dbReference type="NCBI Taxonomy" id="264199"/>
    <lineage>
        <taxon>Bacteria</taxon>
        <taxon>Bacillati</taxon>
        <taxon>Bacillota</taxon>
        <taxon>Bacilli</taxon>
        <taxon>Lactobacillales</taxon>
        <taxon>Streptococcaceae</taxon>
        <taxon>Streptococcus</taxon>
    </lineage>
</organism>
<protein>
    <recommendedName>
        <fullName evidence="1">Small ribosomal subunit protein uS14</fullName>
    </recommendedName>
    <alternativeName>
        <fullName evidence="2">30S ribosomal protein S14 type Z</fullName>
    </alternativeName>
</protein>
<proteinExistence type="inferred from homology"/>